<proteinExistence type="inferred from homology"/>
<name>Y1252_BACC4</name>
<feature type="chain" id="PRO_0000369642" description="UPF0738 protein BCB4264_A1252">
    <location>
        <begin position="1"/>
        <end position="123"/>
    </location>
</feature>
<protein>
    <recommendedName>
        <fullName evidence="1">UPF0738 protein BCB4264_A1252</fullName>
    </recommendedName>
</protein>
<comment type="similarity">
    <text evidence="1">Belongs to the UPF0738 family.</text>
</comment>
<gene>
    <name type="ordered locus">BCB4264_A1252</name>
</gene>
<dbReference type="EMBL" id="CP001176">
    <property type="protein sequence ID" value="ACK62939.1"/>
    <property type="molecule type" value="Genomic_DNA"/>
</dbReference>
<dbReference type="RefSeq" id="WP_001180003.1">
    <property type="nucleotide sequence ID" value="NZ_VEHB01000003.1"/>
</dbReference>
<dbReference type="KEGG" id="bcb:BCB4264_A1252"/>
<dbReference type="HOGENOM" id="CLU_142282_0_0_9"/>
<dbReference type="Proteomes" id="UP000007096">
    <property type="component" value="Chromosome"/>
</dbReference>
<dbReference type="HAMAP" id="MF_01861">
    <property type="entry name" value="UPF0738"/>
    <property type="match status" value="1"/>
</dbReference>
<dbReference type="InterPro" id="IPR020908">
    <property type="entry name" value="UPF0738"/>
</dbReference>
<dbReference type="Pfam" id="PF19785">
    <property type="entry name" value="UPF0738"/>
    <property type="match status" value="1"/>
</dbReference>
<reference key="1">
    <citation type="submission" date="2008-10" db="EMBL/GenBank/DDBJ databases">
        <title>Genome sequence of Bacillus cereus B4264.</title>
        <authorList>
            <person name="Dodson R.J."/>
            <person name="Durkin A.S."/>
            <person name="Rosovitz M.J."/>
            <person name="Rasko D.A."/>
            <person name="Hoffmaster A."/>
            <person name="Ravel J."/>
            <person name="Sutton G."/>
        </authorList>
    </citation>
    <scope>NUCLEOTIDE SEQUENCE [LARGE SCALE GENOMIC DNA]</scope>
    <source>
        <strain>B4264</strain>
    </source>
</reference>
<organism>
    <name type="scientific">Bacillus cereus (strain B4264)</name>
    <dbReference type="NCBI Taxonomy" id="405532"/>
    <lineage>
        <taxon>Bacteria</taxon>
        <taxon>Bacillati</taxon>
        <taxon>Bacillota</taxon>
        <taxon>Bacilli</taxon>
        <taxon>Bacillales</taxon>
        <taxon>Bacillaceae</taxon>
        <taxon>Bacillus</taxon>
        <taxon>Bacillus cereus group</taxon>
    </lineage>
</organism>
<sequence>MQNKIQVKSVEKRENALIFCAENSEIEVKELSARNHVLVDSDNLSFLYILENESSFIYVSIPHTCWEAMHEAMNNDVVMFVRVNDIEMELEGLKEEVEYLVENIEGNANYGEELVTAVEKVFL</sequence>
<evidence type="ECO:0000255" key="1">
    <source>
        <dbReference type="HAMAP-Rule" id="MF_01861"/>
    </source>
</evidence>
<accession>B7HGV8</accession>